<protein>
    <recommendedName>
        <fullName evidence="2">Exodeoxyribonuclease 7 small subunit</fullName>
        <ecNumber evidence="2">3.1.11.6</ecNumber>
    </recommendedName>
    <alternativeName>
        <fullName evidence="2">Exodeoxyribonuclease VII small subunit</fullName>
        <shortName evidence="2">Exonuclease VII small subunit</shortName>
    </alternativeName>
</protein>
<dbReference type="EC" id="3.1.11.6" evidence="2"/>
<dbReference type="EMBL" id="AL513382">
    <property type="protein sequence ID" value="CAD08880.1"/>
    <property type="molecule type" value="Genomic_DNA"/>
</dbReference>
<dbReference type="EMBL" id="AE014613">
    <property type="protein sequence ID" value="AAO70029.1"/>
    <property type="molecule type" value="Genomic_DNA"/>
</dbReference>
<dbReference type="RefSeq" id="NP_455018.1">
    <property type="nucleotide sequence ID" value="NC_003198.1"/>
</dbReference>
<dbReference type="RefSeq" id="WP_001124944.1">
    <property type="nucleotide sequence ID" value="NZ_WSUR01000026.1"/>
</dbReference>
<dbReference type="SMR" id="P67459"/>
<dbReference type="STRING" id="220341.gene:17584485"/>
<dbReference type="KEGG" id="stt:t2439"/>
<dbReference type="KEGG" id="sty:STY0463"/>
<dbReference type="PATRIC" id="fig|220341.7.peg.464"/>
<dbReference type="eggNOG" id="COG1722">
    <property type="taxonomic scope" value="Bacteria"/>
</dbReference>
<dbReference type="HOGENOM" id="CLU_145918_3_3_6"/>
<dbReference type="OMA" id="PLNDYKG"/>
<dbReference type="OrthoDB" id="5591562at2"/>
<dbReference type="Proteomes" id="UP000000541">
    <property type="component" value="Chromosome"/>
</dbReference>
<dbReference type="Proteomes" id="UP000002670">
    <property type="component" value="Chromosome"/>
</dbReference>
<dbReference type="GO" id="GO:0005829">
    <property type="term" value="C:cytosol"/>
    <property type="evidence" value="ECO:0007669"/>
    <property type="project" value="TreeGrafter"/>
</dbReference>
<dbReference type="GO" id="GO:0009318">
    <property type="term" value="C:exodeoxyribonuclease VII complex"/>
    <property type="evidence" value="ECO:0007669"/>
    <property type="project" value="InterPro"/>
</dbReference>
<dbReference type="GO" id="GO:0008855">
    <property type="term" value="F:exodeoxyribonuclease VII activity"/>
    <property type="evidence" value="ECO:0007669"/>
    <property type="project" value="UniProtKB-UniRule"/>
</dbReference>
<dbReference type="GO" id="GO:0006308">
    <property type="term" value="P:DNA catabolic process"/>
    <property type="evidence" value="ECO:0007669"/>
    <property type="project" value="UniProtKB-UniRule"/>
</dbReference>
<dbReference type="FunFam" id="1.10.287.1040:FF:000001">
    <property type="entry name" value="Exodeoxyribonuclease 7 small subunit"/>
    <property type="match status" value="1"/>
</dbReference>
<dbReference type="Gene3D" id="1.10.287.1040">
    <property type="entry name" value="Exonuclease VII, small subunit"/>
    <property type="match status" value="1"/>
</dbReference>
<dbReference type="HAMAP" id="MF_00337">
    <property type="entry name" value="Exonuc_7_S"/>
    <property type="match status" value="1"/>
</dbReference>
<dbReference type="InterPro" id="IPR003761">
    <property type="entry name" value="Exonuc_VII_S"/>
</dbReference>
<dbReference type="InterPro" id="IPR037004">
    <property type="entry name" value="Exonuc_VII_ssu_sf"/>
</dbReference>
<dbReference type="NCBIfam" id="NF002137">
    <property type="entry name" value="PRK00977.1-1"/>
    <property type="match status" value="1"/>
</dbReference>
<dbReference type="NCBIfam" id="NF002140">
    <property type="entry name" value="PRK00977.1-4"/>
    <property type="match status" value="1"/>
</dbReference>
<dbReference type="NCBIfam" id="TIGR01280">
    <property type="entry name" value="xseB"/>
    <property type="match status" value="1"/>
</dbReference>
<dbReference type="PANTHER" id="PTHR34137">
    <property type="entry name" value="EXODEOXYRIBONUCLEASE 7 SMALL SUBUNIT"/>
    <property type="match status" value="1"/>
</dbReference>
<dbReference type="PANTHER" id="PTHR34137:SF1">
    <property type="entry name" value="EXODEOXYRIBONUCLEASE 7 SMALL SUBUNIT"/>
    <property type="match status" value="1"/>
</dbReference>
<dbReference type="Pfam" id="PF02609">
    <property type="entry name" value="Exonuc_VII_S"/>
    <property type="match status" value="1"/>
</dbReference>
<dbReference type="PIRSF" id="PIRSF006488">
    <property type="entry name" value="Exonuc_VII_S"/>
    <property type="match status" value="1"/>
</dbReference>
<dbReference type="SUPFAM" id="SSF116842">
    <property type="entry name" value="XseB-like"/>
    <property type="match status" value="1"/>
</dbReference>
<reference key="1">
    <citation type="journal article" date="2001" name="Nature">
        <title>Complete genome sequence of a multiple drug resistant Salmonella enterica serovar Typhi CT18.</title>
        <authorList>
            <person name="Parkhill J."/>
            <person name="Dougan G."/>
            <person name="James K.D."/>
            <person name="Thomson N.R."/>
            <person name="Pickard D."/>
            <person name="Wain J."/>
            <person name="Churcher C.M."/>
            <person name="Mungall K.L."/>
            <person name="Bentley S.D."/>
            <person name="Holden M.T.G."/>
            <person name="Sebaihia M."/>
            <person name="Baker S."/>
            <person name="Basham D."/>
            <person name="Brooks K."/>
            <person name="Chillingworth T."/>
            <person name="Connerton P."/>
            <person name="Cronin A."/>
            <person name="Davis P."/>
            <person name="Davies R.M."/>
            <person name="Dowd L."/>
            <person name="White N."/>
            <person name="Farrar J."/>
            <person name="Feltwell T."/>
            <person name="Hamlin N."/>
            <person name="Haque A."/>
            <person name="Hien T.T."/>
            <person name="Holroyd S."/>
            <person name="Jagels K."/>
            <person name="Krogh A."/>
            <person name="Larsen T.S."/>
            <person name="Leather S."/>
            <person name="Moule S."/>
            <person name="O'Gaora P."/>
            <person name="Parry C."/>
            <person name="Quail M.A."/>
            <person name="Rutherford K.M."/>
            <person name="Simmonds M."/>
            <person name="Skelton J."/>
            <person name="Stevens K."/>
            <person name="Whitehead S."/>
            <person name="Barrell B.G."/>
        </authorList>
    </citation>
    <scope>NUCLEOTIDE SEQUENCE [LARGE SCALE GENOMIC DNA]</scope>
    <source>
        <strain>CT18</strain>
    </source>
</reference>
<reference key="2">
    <citation type="journal article" date="2003" name="J. Bacteriol.">
        <title>Comparative genomics of Salmonella enterica serovar Typhi strains Ty2 and CT18.</title>
        <authorList>
            <person name="Deng W."/>
            <person name="Liou S.-R."/>
            <person name="Plunkett G. III"/>
            <person name="Mayhew G.F."/>
            <person name="Rose D.J."/>
            <person name="Burland V."/>
            <person name="Kodoyianni V."/>
            <person name="Schwartz D.C."/>
            <person name="Blattner F.R."/>
        </authorList>
    </citation>
    <scope>NUCLEOTIDE SEQUENCE [LARGE SCALE GENOMIC DNA]</scope>
    <source>
        <strain>ATCC 700931 / Ty2</strain>
    </source>
</reference>
<gene>
    <name evidence="2" type="primary">xseB</name>
    <name type="ordered locus">STY0463</name>
    <name type="ordered locus">t2439</name>
</gene>
<proteinExistence type="inferred from homology"/>
<name>EX7S_SALTI</name>
<evidence type="ECO:0000250" key="1"/>
<evidence type="ECO:0000255" key="2">
    <source>
        <dbReference type="HAMAP-Rule" id="MF_00337"/>
    </source>
</evidence>
<organism>
    <name type="scientific">Salmonella typhi</name>
    <dbReference type="NCBI Taxonomy" id="90370"/>
    <lineage>
        <taxon>Bacteria</taxon>
        <taxon>Pseudomonadati</taxon>
        <taxon>Pseudomonadota</taxon>
        <taxon>Gammaproteobacteria</taxon>
        <taxon>Enterobacterales</taxon>
        <taxon>Enterobacteriaceae</taxon>
        <taxon>Salmonella</taxon>
    </lineage>
</organism>
<feature type="initiator methionine" description="Removed" evidence="1">
    <location>
        <position position="1"/>
    </location>
</feature>
<feature type="chain" id="PRO_0000206999" description="Exodeoxyribonuclease 7 small subunit">
    <location>
        <begin position="2"/>
        <end position="80"/>
    </location>
</feature>
<sequence length="80" mass="8932">MPKKNEAPASFETALSELEHIVTRLESGDLPLEDALNEFERGVQLARQGQAKLQQAEQRVQILLSDNEEASPEPFIADNE</sequence>
<accession>P67459</accession>
<accession>Q8XEZ9</accession>
<keyword id="KW-0963">Cytoplasm</keyword>
<keyword id="KW-0269">Exonuclease</keyword>
<keyword id="KW-0378">Hydrolase</keyword>
<keyword id="KW-0540">Nuclease</keyword>
<comment type="function">
    <text evidence="2">Bidirectionally degrades single-stranded DNA into large acid-insoluble oligonucleotides, which are then degraded further into small acid-soluble oligonucleotides.</text>
</comment>
<comment type="catalytic activity">
    <reaction evidence="2">
        <text>Exonucleolytic cleavage in either 5'- to 3'- or 3'- to 5'-direction to yield nucleoside 5'-phosphates.</text>
        <dbReference type="EC" id="3.1.11.6"/>
    </reaction>
</comment>
<comment type="subunit">
    <text evidence="2">Heterooligomer composed of large and small subunits.</text>
</comment>
<comment type="subcellular location">
    <subcellularLocation>
        <location evidence="2">Cytoplasm</location>
    </subcellularLocation>
</comment>
<comment type="similarity">
    <text evidence="2">Belongs to the XseB family.</text>
</comment>